<reference key="1">
    <citation type="journal article" date="2008" name="Acta Crystallogr. F">
        <title>Isolation, crystallization and preliminary X-ray diffraction analysis of L-amino-acid oxidase from Vipera ammodytes ammodytes venom.</title>
        <authorList>
            <person name="Georgieva D."/>
            <person name="Kardas A."/>
            <person name="Buck F."/>
            <person name="Perbandt M."/>
            <person name="Betzel C."/>
        </authorList>
    </citation>
    <scope>IDENTIFICATION BY MASS SPECTROMETRY</scope>
    <scope>CRYSTALLIZATION</scope>
    <scope>SUBCELLULAR LOCATION</scope>
    <source>
        <tissue>Venom</tissue>
    </source>
</reference>
<reference key="2">
    <citation type="journal article" date="2008" name="J. Proteome Res.">
        <title>Comparative analysis of the venom proteomes of Vipera ammodytes ammodytes and Vipera ammodytes meridionalis.</title>
        <authorList>
            <person name="Georgieva D."/>
            <person name="Risch M."/>
            <person name="Kardas A."/>
            <person name="Buck F."/>
            <person name="von Bergen M."/>
            <person name="Betzel C."/>
        </authorList>
    </citation>
    <scope>IDENTIFICATION BY MASS SPECTROMETRY</scope>
    <source>
        <tissue>Venom</tissue>
    </source>
</reference>
<reference key="3">
    <citation type="journal article" date="2011" name="Mol. Biosyst.">
        <title>The structure of a native L-amino acid oxidase, the major component of the Vipera ammodytes ammodytes venomic, reveals dynamic active site and quaternary structure stabilization by divalent ions.</title>
        <authorList>
            <person name="Georgieva D."/>
            <person name="Murakami M."/>
            <person name="Perband M."/>
            <person name="Arni R."/>
            <person name="Betzel C."/>
        </authorList>
    </citation>
    <scope>X-RAY CRYSTALLOGRAPHY (2.57 ANGSTROMS) IN COMPLEX WITH FAD AND ZINC IONS</scope>
    <scope>COFACTOR</scope>
    <scope>SUBUNIT</scope>
    <scope>DISULFIDE BONDS</scope>
    <scope>GLYCOSYLATION AT ASN-170</scope>
    <source>
        <tissue>Venom</tissue>
    </source>
</reference>
<keyword id="KW-0002">3D-structure</keyword>
<keyword id="KW-0044">Antibiotic</keyword>
<keyword id="KW-0929">Antimicrobial</keyword>
<keyword id="KW-0053">Apoptosis</keyword>
<keyword id="KW-0204">Cytolysis</keyword>
<keyword id="KW-1015">Disulfide bond</keyword>
<keyword id="KW-0274">FAD</keyword>
<keyword id="KW-0285">Flavoprotein</keyword>
<keyword id="KW-0325">Glycoprotein</keyword>
<keyword id="KW-0354">Hemolysis</keyword>
<keyword id="KW-1199">Hemostasis impairing toxin</keyword>
<keyword id="KW-0479">Metal-binding</keyword>
<keyword id="KW-0560">Oxidoreductase</keyword>
<keyword id="KW-0964">Secreted</keyword>
<keyword id="KW-0800">Toxin</keyword>
<keyword id="KW-0862">Zinc</keyword>
<feature type="chain" id="PRO_0000412591" description="L-amino-acid oxidase">
    <location>
        <begin position="1"/>
        <end position="484"/>
    </location>
</feature>
<feature type="binding site" evidence="4 8">
    <location>
        <begin position="41"/>
        <end position="42"/>
    </location>
    <ligand>
        <name>FAD</name>
        <dbReference type="ChEBI" id="CHEBI:57692"/>
    </ligand>
</feature>
<feature type="binding site" evidence="4 8">
    <location>
        <begin position="61"/>
        <end position="62"/>
    </location>
    <ligand>
        <name>FAD</name>
        <dbReference type="ChEBI" id="CHEBI:57692"/>
    </ligand>
</feature>
<feature type="binding site" evidence="4 8">
    <location>
        <position position="69"/>
    </location>
    <ligand>
        <name>FAD</name>
        <dbReference type="ChEBI" id="CHEBI:57692"/>
    </ligand>
</feature>
<feature type="binding site" evidence="4 8">
    <location>
        <position position="73"/>
    </location>
    <ligand>
        <name>Zn(2+)</name>
        <dbReference type="ChEBI" id="CHEBI:29105"/>
    </ligand>
</feature>
<feature type="binding site" evidence="4 8">
    <location>
        <begin position="85"/>
        <end position="88"/>
    </location>
    <ligand>
        <name>FAD</name>
        <dbReference type="ChEBI" id="CHEBI:57692"/>
    </ligand>
</feature>
<feature type="binding site" evidence="2">
    <location>
        <position position="88"/>
    </location>
    <ligand>
        <name>substrate</name>
    </ligand>
</feature>
<feature type="binding site" evidence="2">
    <location>
        <position position="221"/>
    </location>
    <ligand>
        <name>substrate</name>
    </ligand>
</feature>
<feature type="binding site" evidence="4 8">
    <location>
        <position position="259"/>
    </location>
    <ligand>
        <name>FAD</name>
        <dbReference type="ChEBI" id="CHEBI:57692"/>
    </ligand>
</feature>
<feature type="binding site" evidence="4 8">
    <location>
        <position position="277"/>
    </location>
    <ligand>
        <name>Zn(2+)</name>
        <dbReference type="ChEBI" id="CHEBI:29105"/>
    </ligand>
</feature>
<feature type="binding site" evidence="2">
    <location>
        <position position="370"/>
    </location>
    <ligand>
        <name>substrate</name>
    </ligand>
</feature>
<feature type="binding site" evidence="4 8">
    <location>
        <position position="455"/>
    </location>
    <ligand>
        <name>FAD</name>
        <dbReference type="ChEBI" id="CHEBI:57692"/>
    </ligand>
</feature>
<feature type="binding site" evidence="4 8">
    <location>
        <begin position="462"/>
        <end position="467"/>
    </location>
    <ligand>
        <name>FAD</name>
        <dbReference type="ChEBI" id="CHEBI:57692"/>
    </ligand>
</feature>
<feature type="binding site" evidence="2">
    <location>
        <begin position="462"/>
        <end position="463"/>
    </location>
    <ligand>
        <name>substrate</name>
    </ligand>
</feature>
<feature type="glycosylation site" description="N-linked (GlcNAc...) asparagine" evidence="4 8">
    <location>
        <position position="170"/>
    </location>
</feature>
<feature type="disulfide bond" evidence="4">
    <location>
        <begin position="8"/>
        <end position="171"/>
    </location>
</feature>
<feature type="disulfide bond" evidence="4">
    <location>
        <begin position="329"/>
        <end position="410"/>
    </location>
</feature>
<feature type="helix" evidence="9">
    <location>
        <begin position="6"/>
        <end position="9"/>
    </location>
</feature>
<feature type="helix" evidence="9">
    <location>
        <begin position="14"/>
        <end position="23"/>
    </location>
</feature>
<feature type="strand" evidence="9">
    <location>
        <begin position="33"/>
        <end position="37"/>
    </location>
</feature>
<feature type="helix" evidence="9">
    <location>
        <begin position="41"/>
        <end position="52"/>
    </location>
</feature>
<feature type="strand" evidence="9">
    <location>
        <begin position="56"/>
        <end position="60"/>
    </location>
</feature>
<feature type="strand" evidence="9">
    <location>
        <begin position="62"/>
        <end position="67"/>
    </location>
</feature>
<feature type="strand" evidence="9">
    <location>
        <begin position="72"/>
        <end position="75"/>
    </location>
</feature>
<feature type="turn" evidence="9">
    <location>
        <begin position="76"/>
        <end position="79"/>
    </location>
</feature>
<feature type="strand" evidence="9">
    <location>
        <begin position="80"/>
        <end position="85"/>
    </location>
</feature>
<feature type="helix" evidence="9">
    <location>
        <begin position="94"/>
        <end position="102"/>
    </location>
</feature>
<feature type="strand" evidence="9">
    <location>
        <begin position="107"/>
        <end position="110"/>
    </location>
</feature>
<feature type="strand" evidence="9">
    <location>
        <begin position="117"/>
        <end position="121"/>
    </location>
</feature>
<feature type="strand" evidence="9">
    <location>
        <begin position="124"/>
        <end position="127"/>
    </location>
</feature>
<feature type="helix" evidence="9">
    <location>
        <begin position="128"/>
        <end position="133"/>
    </location>
</feature>
<feature type="helix" evidence="9">
    <location>
        <begin position="135"/>
        <end position="138"/>
    </location>
</feature>
<feature type="helix" evidence="9">
    <location>
        <begin position="144"/>
        <end position="146"/>
    </location>
</feature>
<feature type="helix" evidence="9">
    <location>
        <begin position="151"/>
        <end position="158"/>
    </location>
</feature>
<feature type="helix" evidence="9">
    <location>
        <begin position="160"/>
        <end position="166"/>
    </location>
</feature>
<feature type="helix" evidence="9">
    <location>
        <begin position="171"/>
        <end position="177"/>
    </location>
</feature>
<feature type="helix" evidence="9">
    <location>
        <begin position="178"/>
        <end position="180"/>
    </location>
</feature>
<feature type="helix" evidence="9">
    <location>
        <begin position="183"/>
        <end position="189"/>
    </location>
</feature>
<feature type="helix" evidence="9">
    <location>
        <begin position="195"/>
        <end position="204"/>
    </location>
</feature>
<feature type="helix" evidence="9">
    <location>
        <begin position="208"/>
        <end position="210"/>
    </location>
</feature>
<feature type="helix" evidence="9">
    <location>
        <begin position="215"/>
        <end position="225"/>
    </location>
</feature>
<feature type="strand" evidence="9">
    <location>
        <begin position="231"/>
        <end position="234"/>
    </location>
</feature>
<feature type="helix" evidence="9">
    <location>
        <begin position="240"/>
        <end position="248"/>
    </location>
</feature>
<feature type="helix" evidence="9">
    <location>
        <begin position="249"/>
        <end position="252"/>
    </location>
</feature>
<feature type="strand" evidence="9">
    <location>
        <begin position="253"/>
        <end position="256"/>
    </location>
</feature>
<feature type="strand" evidence="9">
    <location>
        <begin position="258"/>
        <end position="264"/>
    </location>
</feature>
<feature type="strand" evidence="9">
    <location>
        <begin position="269"/>
        <end position="274"/>
    </location>
</feature>
<feature type="strand" evidence="9">
    <location>
        <begin position="276"/>
        <end position="278"/>
    </location>
</feature>
<feature type="strand" evidence="9">
    <location>
        <begin position="281"/>
        <end position="290"/>
    </location>
</feature>
<feature type="helix" evidence="9">
    <location>
        <begin position="294"/>
        <end position="297"/>
    </location>
</feature>
<feature type="strand" evidence="9">
    <location>
        <begin position="300"/>
        <end position="304"/>
    </location>
</feature>
<feature type="helix" evidence="9">
    <location>
        <begin position="308"/>
        <end position="316"/>
    </location>
</feature>
<feature type="strand" evidence="9">
    <location>
        <begin position="322"/>
        <end position="331"/>
    </location>
</feature>
<feature type="helix" evidence="9">
    <location>
        <begin position="333"/>
        <end position="337"/>
    </location>
</feature>
<feature type="strand" evidence="9">
    <location>
        <begin position="341"/>
        <end position="348"/>
    </location>
</feature>
<feature type="strand" evidence="9">
    <location>
        <begin position="352"/>
        <end position="354"/>
    </location>
</feature>
<feature type="strand" evidence="9">
    <location>
        <begin position="365"/>
        <end position="372"/>
    </location>
</feature>
<feature type="helix" evidence="9">
    <location>
        <begin position="373"/>
        <end position="380"/>
    </location>
</feature>
<feature type="helix" evidence="9">
    <location>
        <begin position="384"/>
        <end position="399"/>
    </location>
</feature>
<feature type="helix" evidence="9">
    <location>
        <begin position="403"/>
        <end position="409"/>
    </location>
</feature>
<feature type="strand" evidence="9">
    <location>
        <begin position="410"/>
        <end position="417"/>
    </location>
</feature>
<feature type="helix" evidence="9">
    <location>
        <begin position="418"/>
        <end position="420"/>
    </location>
</feature>
<feature type="turn" evidence="9">
    <location>
        <begin position="422"/>
        <end position="424"/>
    </location>
</feature>
<feature type="strand" evidence="9">
    <location>
        <begin position="425"/>
        <end position="429"/>
    </location>
</feature>
<feature type="helix" evidence="9">
    <location>
        <begin position="435"/>
        <end position="444"/>
    </location>
</feature>
<feature type="strand" evidence="9">
    <location>
        <begin position="450"/>
        <end position="452"/>
    </location>
</feature>
<feature type="helix" evidence="9">
    <location>
        <begin position="455"/>
        <end position="457"/>
    </location>
</feature>
<feature type="strand" evidence="9">
    <location>
        <begin position="458"/>
        <end position="462"/>
    </location>
</feature>
<feature type="helix" evidence="9">
    <location>
        <begin position="464"/>
        <end position="481"/>
    </location>
</feature>
<protein>
    <recommendedName>
        <fullName>L-amino-acid oxidase</fullName>
        <shortName>LAO</shortName>
        <shortName evidence="5">VAA-LAAO I</shortName>
        <ecNumber evidence="2">1.4.3.2</ecNumber>
    </recommendedName>
</protein>
<sequence length="484" mass="54748">DRNPLEECFRETDYEEFLEIARNGLKKTSNPKHVVVVGAGMSGLSAAYVLAGAGHKVTVLEASERAGGRVRTHRNSKEGWYANLGPMRIPEKHRIVREYIRKFGLNLNEFSQENDNAWYFIKNIRKRVGEVNKDPGLLKYPVKPSEEGKSAGQLYEESLGSAVKDLKRTNCSYILNKYDTYSTKEYLIKEGNLSPGAVDMIGDLLNEDSGYYVSFIESLKHDDIFAYEKRFDEIVGGMDQLPTSMYRAIEEKVKFNARVIKIQQNANQVTVTYQTPEKDTSSNTADYVIVCTTSRAARRIQFEPPLPPKKQHALRSVHYRSGTKIFLTCSSKFWEDDGIHGGKSTTDLPSRFIYYPNHNFSTGVGVIIAYGIGDDANFFQALKFKDCADIVFNDLSLIHQLPKEEIQSFCYPSMIQKWSLDKYAMGAITTFTPYQFQRFSEALTAPQGRIFFAGEYTAEAHGWIDSTIKSGLTAARDVNRASEQ</sequence>
<evidence type="ECO:0000250" key="1">
    <source>
        <dbReference type="UniProtKB" id="P0CC17"/>
    </source>
</evidence>
<evidence type="ECO:0000250" key="2">
    <source>
        <dbReference type="UniProtKB" id="P81382"/>
    </source>
</evidence>
<evidence type="ECO:0000269" key="3">
    <source>
    </source>
</evidence>
<evidence type="ECO:0000269" key="4">
    <source>
    </source>
</evidence>
<evidence type="ECO:0000303" key="5">
    <source>
    </source>
</evidence>
<evidence type="ECO:0000305" key="6"/>
<evidence type="ECO:0000305" key="7">
    <source>
    </source>
</evidence>
<evidence type="ECO:0007744" key="8">
    <source>
        <dbReference type="PDB" id="3KVE"/>
    </source>
</evidence>
<evidence type="ECO:0007829" key="9">
    <source>
        <dbReference type="PDB" id="3KVE"/>
    </source>
</evidence>
<accession>P0DI84</accession>
<dbReference type="EC" id="1.4.3.2" evidence="2"/>
<dbReference type="PDB" id="3KVE">
    <property type="method" value="X-ray"/>
    <property type="resolution" value="2.57 A"/>
    <property type="chains" value="A/B/C/D=1-484"/>
</dbReference>
<dbReference type="PDBsum" id="3KVE"/>
<dbReference type="SMR" id="P0DI84"/>
<dbReference type="iPTMnet" id="P0DI84"/>
<dbReference type="EvolutionaryTrace" id="P0DI84"/>
<dbReference type="GO" id="GO:0005576">
    <property type="term" value="C:extracellular region"/>
    <property type="evidence" value="ECO:0007669"/>
    <property type="project" value="UniProtKB-SubCell"/>
</dbReference>
<dbReference type="GO" id="GO:0001716">
    <property type="term" value="F:L-amino-acid oxidase activity"/>
    <property type="evidence" value="ECO:0007669"/>
    <property type="project" value="UniProtKB-EC"/>
</dbReference>
<dbReference type="GO" id="GO:0046872">
    <property type="term" value="F:metal ion binding"/>
    <property type="evidence" value="ECO:0007669"/>
    <property type="project" value="UniProtKB-KW"/>
</dbReference>
<dbReference type="GO" id="GO:0090729">
    <property type="term" value="F:toxin activity"/>
    <property type="evidence" value="ECO:0007669"/>
    <property type="project" value="UniProtKB-KW"/>
</dbReference>
<dbReference type="GO" id="GO:0009063">
    <property type="term" value="P:amino acid catabolic process"/>
    <property type="evidence" value="ECO:0007669"/>
    <property type="project" value="TreeGrafter"/>
</dbReference>
<dbReference type="GO" id="GO:0006915">
    <property type="term" value="P:apoptotic process"/>
    <property type="evidence" value="ECO:0007669"/>
    <property type="project" value="UniProtKB-KW"/>
</dbReference>
<dbReference type="GO" id="GO:0042742">
    <property type="term" value="P:defense response to bacterium"/>
    <property type="evidence" value="ECO:0007669"/>
    <property type="project" value="UniProtKB-KW"/>
</dbReference>
<dbReference type="GO" id="GO:0031640">
    <property type="term" value="P:killing of cells of another organism"/>
    <property type="evidence" value="ECO:0007669"/>
    <property type="project" value="UniProtKB-KW"/>
</dbReference>
<dbReference type="FunFam" id="1.10.405.10:FF:000004">
    <property type="entry name" value="Amine oxidase"/>
    <property type="match status" value="1"/>
</dbReference>
<dbReference type="FunFam" id="3.50.50.60:FF:000450">
    <property type="entry name" value="Amine oxidase"/>
    <property type="match status" value="1"/>
</dbReference>
<dbReference type="FunFam" id="3.50.50.60:FF:001010">
    <property type="entry name" value="L-amino-acid oxidase"/>
    <property type="match status" value="1"/>
</dbReference>
<dbReference type="Gene3D" id="3.90.660.10">
    <property type="match status" value="1"/>
</dbReference>
<dbReference type="Gene3D" id="3.50.50.60">
    <property type="entry name" value="FAD/NAD(P)-binding domain"/>
    <property type="match status" value="1"/>
</dbReference>
<dbReference type="Gene3D" id="1.10.405.10">
    <property type="entry name" value="Guanine Nucleotide Dissociation Inhibitor, domain 1"/>
    <property type="match status" value="1"/>
</dbReference>
<dbReference type="InterPro" id="IPR002937">
    <property type="entry name" value="Amino_oxidase"/>
</dbReference>
<dbReference type="InterPro" id="IPR036188">
    <property type="entry name" value="FAD/NAD-bd_sf"/>
</dbReference>
<dbReference type="InterPro" id="IPR001613">
    <property type="entry name" value="Flavin_amine_oxidase"/>
</dbReference>
<dbReference type="InterPro" id="IPR050281">
    <property type="entry name" value="Flavin_monoamine_oxidase"/>
</dbReference>
<dbReference type="PANTHER" id="PTHR10742:SF355">
    <property type="entry name" value="AMINE OXIDASE"/>
    <property type="match status" value="1"/>
</dbReference>
<dbReference type="PANTHER" id="PTHR10742">
    <property type="entry name" value="FLAVIN MONOAMINE OXIDASE"/>
    <property type="match status" value="1"/>
</dbReference>
<dbReference type="Pfam" id="PF01593">
    <property type="entry name" value="Amino_oxidase"/>
    <property type="match status" value="1"/>
</dbReference>
<dbReference type="PRINTS" id="PR00757">
    <property type="entry name" value="AMINEOXDASEF"/>
</dbReference>
<dbReference type="SUPFAM" id="SSF54373">
    <property type="entry name" value="FAD-linked reductases, C-terminal domain"/>
    <property type="match status" value="1"/>
</dbReference>
<dbReference type="SUPFAM" id="SSF51905">
    <property type="entry name" value="FAD/NAD(P)-binding domain"/>
    <property type="match status" value="1"/>
</dbReference>
<comment type="function">
    <text evidence="1">Catalyzes an oxidative deamination of predominantly hydrophobic and aromatic L-amino acids, thus producing hydrogen peroxide that may contribute to the diverse toxic effects of this enzyme. Exhibits diverse biological activities, such as hemorrhage, hemolysis, edema, apoptosis of vascular endothelial cells or tumor cell lines, antibacterial and antiparasitic activities, as well as regulation of platelet aggregation. Effects of snake L-amino oxidases on platelets are controversial, since they either induce aggregation or inhibit agonist-induced aggregation. These different effects are probably due to different experimental conditions.</text>
</comment>
<comment type="catalytic activity">
    <reaction evidence="2">
        <text>an L-alpha-amino acid + O2 + H2O = a 2-oxocarboxylate + H2O2 + NH4(+)</text>
        <dbReference type="Rhea" id="RHEA:13781"/>
        <dbReference type="ChEBI" id="CHEBI:15377"/>
        <dbReference type="ChEBI" id="CHEBI:15379"/>
        <dbReference type="ChEBI" id="CHEBI:16240"/>
        <dbReference type="ChEBI" id="CHEBI:28938"/>
        <dbReference type="ChEBI" id="CHEBI:35179"/>
        <dbReference type="ChEBI" id="CHEBI:59869"/>
        <dbReference type="EC" id="1.4.3.2"/>
    </reaction>
</comment>
<comment type="cofactor">
    <cofactor evidence="4">
        <name>FAD</name>
        <dbReference type="ChEBI" id="CHEBI:57692"/>
    </cofactor>
</comment>
<comment type="subunit">
    <text evidence="4">Homodimer; non-covalently linked.</text>
</comment>
<comment type="subcellular location">
    <subcellularLocation>
        <location evidence="3">Secreted</location>
    </subcellularLocation>
</comment>
<comment type="tissue specificity">
    <text evidence="7">Expressed by the venom gland.</text>
</comment>
<comment type="similarity">
    <text evidence="6">Belongs to the flavin monoamine oxidase family. FIG1 subfamily.</text>
</comment>
<name>OXLA_VIPAA</name>
<organism>
    <name type="scientific">Vipera ammodytes ammodytes</name>
    <name type="common">Western sand viper</name>
    <dbReference type="NCBI Taxonomy" id="8705"/>
    <lineage>
        <taxon>Eukaryota</taxon>
        <taxon>Metazoa</taxon>
        <taxon>Chordata</taxon>
        <taxon>Craniata</taxon>
        <taxon>Vertebrata</taxon>
        <taxon>Euteleostomi</taxon>
        <taxon>Lepidosauria</taxon>
        <taxon>Squamata</taxon>
        <taxon>Bifurcata</taxon>
        <taxon>Unidentata</taxon>
        <taxon>Episquamata</taxon>
        <taxon>Toxicofera</taxon>
        <taxon>Serpentes</taxon>
        <taxon>Colubroidea</taxon>
        <taxon>Viperidae</taxon>
        <taxon>Viperinae</taxon>
        <taxon>Vipera</taxon>
    </lineage>
</organism>
<proteinExistence type="evidence at protein level"/>